<protein>
    <recommendedName>
        <fullName>Hainantoxin-X.3</fullName>
        <shortName>HNTX-X.3</shortName>
    </recommendedName>
</protein>
<name>H10A3_CYRHA</name>
<proteinExistence type="inferred from homology"/>
<sequence length="65" mass="7059">MNMKILVLVAVLCLVVSTHAERHSKTDMGDSPMIQERKCLPPGKPCYGATQKIPCCGVCSHNNCT</sequence>
<keyword id="KW-0108">Calcium channel impairing toxin</keyword>
<keyword id="KW-1015">Disulfide bond</keyword>
<keyword id="KW-0872">Ion channel impairing toxin</keyword>
<keyword id="KW-0960">Knottin</keyword>
<keyword id="KW-0528">Neurotoxin</keyword>
<keyword id="KW-0964">Secreted</keyword>
<keyword id="KW-0732">Signal</keyword>
<keyword id="KW-0800">Toxin</keyword>
<keyword id="KW-1218">Voltage-gated calcium channel impairing toxin</keyword>
<dbReference type="EMBL" id="GU293140">
    <property type="protein sequence ID" value="ADB56956.1"/>
    <property type="molecule type" value="Genomic_DNA"/>
</dbReference>
<dbReference type="SMR" id="D2Y2R3"/>
<dbReference type="ArachnoServer" id="AS001835">
    <property type="toxin name" value="omega-theraphotoxin-Hhn2a"/>
</dbReference>
<dbReference type="GO" id="GO:0005576">
    <property type="term" value="C:extracellular region"/>
    <property type="evidence" value="ECO:0007669"/>
    <property type="project" value="UniProtKB-SubCell"/>
</dbReference>
<dbReference type="GO" id="GO:0005246">
    <property type="term" value="F:calcium channel regulator activity"/>
    <property type="evidence" value="ECO:0007669"/>
    <property type="project" value="UniProtKB-KW"/>
</dbReference>
<dbReference type="GO" id="GO:0090729">
    <property type="term" value="F:toxin activity"/>
    <property type="evidence" value="ECO:0007669"/>
    <property type="project" value="UniProtKB-KW"/>
</dbReference>
<dbReference type="SUPFAM" id="SSF57059">
    <property type="entry name" value="omega toxin-like"/>
    <property type="match status" value="1"/>
</dbReference>
<feature type="signal peptide" evidence="2">
    <location>
        <begin position="1"/>
        <end position="20"/>
    </location>
</feature>
<feature type="propeptide" id="PRO_0000400972" evidence="1">
    <location>
        <begin position="21"/>
        <end position="37"/>
    </location>
</feature>
<feature type="peptide" id="PRO_0000400973" description="Hainantoxin-X.3">
    <location>
        <begin position="38"/>
        <end position="65"/>
    </location>
</feature>
<feature type="disulfide bond" evidence="1">
    <location>
        <begin position="39"/>
        <end position="56"/>
    </location>
</feature>
<feature type="disulfide bond" evidence="1">
    <location>
        <begin position="46"/>
        <end position="59"/>
    </location>
</feature>
<feature type="disulfide bond" evidence="1">
    <location>
        <begin position="55"/>
        <end position="64"/>
    </location>
</feature>
<organism>
    <name type="scientific">Cyriopagopus hainanus</name>
    <name type="common">Chinese bird spider</name>
    <name type="synonym">Haplopelma hainanum</name>
    <dbReference type="NCBI Taxonomy" id="209901"/>
    <lineage>
        <taxon>Eukaryota</taxon>
        <taxon>Metazoa</taxon>
        <taxon>Ecdysozoa</taxon>
        <taxon>Arthropoda</taxon>
        <taxon>Chelicerata</taxon>
        <taxon>Arachnida</taxon>
        <taxon>Araneae</taxon>
        <taxon>Mygalomorphae</taxon>
        <taxon>Theraphosidae</taxon>
        <taxon>Haplopelma</taxon>
    </lineage>
</organism>
<comment type="function">
    <text evidence="1">Reversibly blocks N-type calcium channels (Cav2.2/CACNA1B) in rat dorsal root ganglion cells. Elicits no toxic symptoms in either vertebrates or invertebrates during a period of 48 hours post-injection, when it was assayed in vivo by direct injection into mice and cockroaches (By similarity).</text>
</comment>
<comment type="subcellular location">
    <subcellularLocation>
        <location evidence="1">Secreted</location>
    </subcellularLocation>
</comment>
<comment type="tissue specificity">
    <text>Expressed by the venom gland.</text>
</comment>
<comment type="domain">
    <text evidence="1">The presence of a 'disulfide through disulfide knot' structurally defines this protein as a knottin.</text>
</comment>
<comment type="similarity">
    <text>Belongs to the neurotoxin 36 family. 02 subfamily.</text>
</comment>
<reference key="1">
    <citation type="journal article" date="2010" name="J. Proteome Res.">
        <title>Molecular diversification of peptide toxins from the tarantula Haplopelma hainanum (Ornithoctonus hainana) venom based on transcriptomic, peptidomic, and genomic analyses.</title>
        <authorList>
            <person name="Tang X."/>
            <person name="Zhang Y."/>
            <person name="Hu W."/>
            <person name="Xu D."/>
            <person name="Tao H."/>
            <person name="Yang X."/>
            <person name="Li Y."/>
            <person name="Jiang L."/>
            <person name="Liang S."/>
        </authorList>
    </citation>
    <scope>NUCLEOTIDE SEQUENCE [LARGE SCALE GENOMIC DNA]</scope>
    <source>
        <tissue>Venom gland</tissue>
    </source>
</reference>
<accession>D2Y2R3</accession>
<evidence type="ECO:0000250" key="1"/>
<evidence type="ECO:0000255" key="2"/>